<reference key="1">
    <citation type="journal article" date="2009" name="J. Bacteriol.">
        <title>The genome of Burkholderia cenocepacia J2315, an epidemic pathogen of cystic fibrosis patients.</title>
        <authorList>
            <person name="Holden M.T."/>
            <person name="Seth-Smith H.M."/>
            <person name="Crossman L.C."/>
            <person name="Sebaihia M."/>
            <person name="Bentley S.D."/>
            <person name="Cerdeno-Tarraga A.M."/>
            <person name="Thomson N.R."/>
            <person name="Bason N."/>
            <person name="Quail M.A."/>
            <person name="Sharp S."/>
            <person name="Cherevach I."/>
            <person name="Churcher C."/>
            <person name="Goodhead I."/>
            <person name="Hauser H."/>
            <person name="Holroyd N."/>
            <person name="Mungall K."/>
            <person name="Scott P."/>
            <person name="Walker D."/>
            <person name="White B."/>
            <person name="Rose H."/>
            <person name="Iversen P."/>
            <person name="Mil-Homens D."/>
            <person name="Rocha E.P."/>
            <person name="Fialho A.M."/>
            <person name="Baldwin A."/>
            <person name="Dowson C."/>
            <person name="Barrell B.G."/>
            <person name="Govan J.R."/>
            <person name="Vandamme P."/>
            <person name="Hart C.A."/>
            <person name="Mahenthiralingam E."/>
            <person name="Parkhill J."/>
        </authorList>
    </citation>
    <scope>NUCLEOTIDE SEQUENCE [LARGE SCALE GENOMIC DNA]</scope>
    <source>
        <strain>ATCC BAA-245 / DSM 16553 / LMG 16656 / NCTC 13227 / J2315 / CF5610</strain>
    </source>
</reference>
<proteinExistence type="inferred from homology"/>
<comment type="similarity">
    <text evidence="1">Belongs to the UPF0502 family.</text>
</comment>
<accession>B4ELG6</accession>
<evidence type="ECO:0000255" key="1">
    <source>
        <dbReference type="HAMAP-Rule" id="MF_01584"/>
    </source>
</evidence>
<feature type="chain" id="PRO_1000201234" description="UPF0502 protein BceJ2315_62050">
    <location>
        <begin position="1"/>
        <end position="236"/>
    </location>
</feature>
<name>Y6205_BURCJ</name>
<organism>
    <name type="scientific">Burkholderia cenocepacia (strain ATCC BAA-245 / DSM 16553 / LMG 16656 / NCTC 13227 / J2315 / CF5610)</name>
    <name type="common">Burkholderia cepacia (strain J2315)</name>
    <dbReference type="NCBI Taxonomy" id="216591"/>
    <lineage>
        <taxon>Bacteria</taxon>
        <taxon>Pseudomonadati</taxon>
        <taxon>Pseudomonadota</taxon>
        <taxon>Betaproteobacteria</taxon>
        <taxon>Burkholderiales</taxon>
        <taxon>Burkholderiaceae</taxon>
        <taxon>Burkholderia</taxon>
        <taxon>Burkholderia cepacia complex</taxon>
    </lineage>
</organism>
<protein>
    <recommendedName>
        <fullName evidence="1">UPF0502 protein BceJ2315_62050</fullName>
    </recommendedName>
</protein>
<gene>
    <name type="ordered locus">BceJ2315_62050</name>
    <name type="ORF">BCAM2767</name>
</gene>
<sequence length="236" mass="25405">MNTTPDTPTPRALRELTPLEARILGVLVEKQHTVPDTYPLSLNALTAGCNQKTARAPVMNVSEDEVTTALDGLKHLSLVMEGSSSRVPRFEHNMNRVLGIPSQAIALLTILLLRGPQTAAELRLNSARLHGFADISSVEAFLDELAARAQPLVVRLPRAPGARENRWMHLMCGEVNMADFASADAGGGADSVPPSEFEALKAEQKRLADEVTRLNALVQRMASELGIDVDTPGNAS</sequence>
<dbReference type="EMBL" id="AM747721">
    <property type="protein sequence ID" value="CAR56631.1"/>
    <property type="molecule type" value="Genomic_DNA"/>
</dbReference>
<dbReference type="RefSeq" id="WP_012493633.1">
    <property type="nucleotide sequence ID" value="NC_011001.1"/>
</dbReference>
<dbReference type="SMR" id="B4ELG6"/>
<dbReference type="KEGG" id="bcj:BCAM2767"/>
<dbReference type="eggNOG" id="COG3132">
    <property type="taxonomic scope" value="Bacteria"/>
</dbReference>
<dbReference type="HOGENOM" id="CLU_057831_0_0_4"/>
<dbReference type="BioCyc" id="BCEN216591:G1G1V-6891-MONOMER"/>
<dbReference type="Proteomes" id="UP000001035">
    <property type="component" value="Chromosome 2"/>
</dbReference>
<dbReference type="Gene3D" id="1.10.10.10">
    <property type="entry name" value="Winged helix-like DNA-binding domain superfamily/Winged helix DNA-binding domain"/>
    <property type="match status" value="2"/>
</dbReference>
<dbReference type="HAMAP" id="MF_01584">
    <property type="entry name" value="UPF0502"/>
    <property type="match status" value="1"/>
</dbReference>
<dbReference type="InterPro" id="IPR007432">
    <property type="entry name" value="DUF480"/>
</dbReference>
<dbReference type="InterPro" id="IPR036388">
    <property type="entry name" value="WH-like_DNA-bd_sf"/>
</dbReference>
<dbReference type="InterPro" id="IPR036390">
    <property type="entry name" value="WH_DNA-bd_sf"/>
</dbReference>
<dbReference type="PANTHER" id="PTHR38768">
    <property type="entry name" value="UPF0502 PROTEIN YCEH"/>
    <property type="match status" value="1"/>
</dbReference>
<dbReference type="PANTHER" id="PTHR38768:SF1">
    <property type="entry name" value="UPF0502 PROTEIN YCEH"/>
    <property type="match status" value="1"/>
</dbReference>
<dbReference type="Pfam" id="PF04337">
    <property type="entry name" value="DUF480"/>
    <property type="match status" value="1"/>
</dbReference>
<dbReference type="SUPFAM" id="SSF46785">
    <property type="entry name" value="Winged helix' DNA-binding domain"/>
    <property type="match status" value="2"/>
</dbReference>